<keyword id="KW-0012">Acyltransferase</keyword>
<keyword id="KW-0133">Cell shape</keyword>
<keyword id="KW-0961">Cell wall biogenesis/degradation</keyword>
<keyword id="KW-0963">Cytoplasm</keyword>
<keyword id="KW-0460">Magnesium</keyword>
<keyword id="KW-0479">Metal-binding</keyword>
<keyword id="KW-0511">Multifunctional enzyme</keyword>
<keyword id="KW-0548">Nucleotidyltransferase</keyword>
<keyword id="KW-0573">Peptidoglycan synthesis</keyword>
<keyword id="KW-0677">Repeat</keyword>
<keyword id="KW-0808">Transferase</keyword>
<name>GLMU_ACIF5</name>
<reference key="1">
    <citation type="submission" date="2008-08" db="EMBL/GenBank/DDBJ databases">
        <title>Complete sequence of Acidithiobacillus ferrooxidans ATCC 53993.</title>
        <authorList>
            <person name="Lucas S."/>
            <person name="Copeland A."/>
            <person name="Lapidus A."/>
            <person name="Glavina del Rio T."/>
            <person name="Dalin E."/>
            <person name="Tice H."/>
            <person name="Bruce D."/>
            <person name="Goodwin L."/>
            <person name="Pitluck S."/>
            <person name="Sims D."/>
            <person name="Brettin T."/>
            <person name="Detter J.C."/>
            <person name="Han C."/>
            <person name="Kuske C.R."/>
            <person name="Larimer F."/>
            <person name="Land M."/>
            <person name="Hauser L."/>
            <person name="Kyrpides N."/>
            <person name="Lykidis A."/>
            <person name="Borole A.P."/>
        </authorList>
    </citation>
    <scope>NUCLEOTIDE SEQUENCE [LARGE SCALE GENOMIC DNA]</scope>
    <source>
        <strain>ATCC 53993 / BNL-5-31</strain>
    </source>
</reference>
<feature type="chain" id="PRO_1000186385" description="Bifunctional protein GlmU">
    <location>
        <begin position="1"/>
        <end position="455"/>
    </location>
</feature>
<feature type="region of interest" description="Pyrophosphorylase" evidence="1">
    <location>
        <begin position="1"/>
        <end position="227"/>
    </location>
</feature>
<feature type="region of interest" description="Linker" evidence="1">
    <location>
        <begin position="228"/>
        <end position="248"/>
    </location>
</feature>
<feature type="region of interest" description="N-acetyltransferase" evidence="1">
    <location>
        <begin position="249"/>
        <end position="455"/>
    </location>
</feature>
<feature type="region of interest" description="Disordered" evidence="2">
    <location>
        <begin position="420"/>
        <end position="455"/>
    </location>
</feature>
<feature type="active site" description="Proton acceptor" evidence="1">
    <location>
        <position position="361"/>
    </location>
</feature>
<feature type="binding site" evidence="1">
    <location>
        <begin position="8"/>
        <end position="11"/>
    </location>
    <ligand>
        <name>UDP-N-acetyl-alpha-D-glucosamine</name>
        <dbReference type="ChEBI" id="CHEBI:57705"/>
    </ligand>
</feature>
<feature type="binding site" evidence="1">
    <location>
        <position position="22"/>
    </location>
    <ligand>
        <name>UDP-N-acetyl-alpha-D-glucosamine</name>
        <dbReference type="ChEBI" id="CHEBI:57705"/>
    </ligand>
</feature>
<feature type="binding site" evidence="1">
    <location>
        <position position="73"/>
    </location>
    <ligand>
        <name>UDP-N-acetyl-alpha-D-glucosamine</name>
        <dbReference type="ChEBI" id="CHEBI:57705"/>
    </ligand>
</feature>
<feature type="binding site" evidence="1">
    <location>
        <begin position="78"/>
        <end position="79"/>
    </location>
    <ligand>
        <name>UDP-N-acetyl-alpha-D-glucosamine</name>
        <dbReference type="ChEBI" id="CHEBI:57705"/>
    </ligand>
</feature>
<feature type="binding site" evidence="1">
    <location>
        <begin position="100"/>
        <end position="102"/>
    </location>
    <ligand>
        <name>UDP-N-acetyl-alpha-D-glucosamine</name>
        <dbReference type="ChEBI" id="CHEBI:57705"/>
    </ligand>
</feature>
<feature type="binding site" evidence="1">
    <location>
        <position position="102"/>
    </location>
    <ligand>
        <name>Mg(2+)</name>
        <dbReference type="ChEBI" id="CHEBI:18420"/>
    </ligand>
</feature>
<feature type="binding site" evidence="1">
    <location>
        <position position="137"/>
    </location>
    <ligand>
        <name>UDP-N-acetyl-alpha-D-glucosamine</name>
        <dbReference type="ChEBI" id="CHEBI:57705"/>
    </ligand>
</feature>
<feature type="binding site" evidence="1">
    <location>
        <position position="152"/>
    </location>
    <ligand>
        <name>UDP-N-acetyl-alpha-D-glucosamine</name>
        <dbReference type="ChEBI" id="CHEBI:57705"/>
    </ligand>
</feature>
<feature type="binding site" evidence="1">
    <location>
        <position position="167"/>
    </location>
    <ligand>
        <name>UDP-N-acetyl-alpha-D-glucosamine</name>
        <dbReference type="ChEBI" id="CHEBI:57705"/>
    </ligand>
</feature>
<feature type="binding site" evidence="1">
    <location>
        <position position="225"/>
    </location>
    <ligand>
        <name>Mg(2+)</name>
        <dbReference type="ChEBI" id="CHEBI:18420"/>
    </ligand>
</feature>
<feature type="binding site" evidence="1">
    <location>
        <position position="225"/>
    </location>
    <ligand>
        <name>UDP-N-acetyl-alpha-D-glucosamine</name>
        <dbReference type="ChEBI" id="CHEBI:57705"/>
    </ligand>
</feature>
<feature type="binding site" evidence="1">
    <location>
        <position position="331"/>
    </location>
    <ligand>
        <name>UDP-N-acetyl-alpha-D-glucosamine</name>
        <dbReference type="ChEBI" id="CHEBI:57705"/>
    </ligand>
</feature>
<feature type="binding site" evidence="1">
    <location>
        <position position="349"/>
    </location>
    <ligand>
        <name>UDP-N-acetyl-alpha-D-glucosamine</name>
        <dbReference type="ChEBI" id="CHEBI:57705"/>
    </ligand>
</feature>
<feature type="binding site" evidence="1">
    <location>
        <position position="364"/>
    </location>
    <ligand>
        <name>UDP-N-acetyl-alpha-D-glucosamine</name>
        <dbReference type="ChEBI" id="CHEBI:57705"/>
    </ligand>
</feature>
<feature type="binding site" evidence="1">
    <location>
        <position position="375"/>
    </location>
    <ligand>
        <name>UDP-N-acetyl-alpha-D-glucosamine</name>
        <dbReference type="ChEBI" id="CHEBI:57705"/>
    </ligand>
</feature>
<feature type="binding site" evidence="1">
    <location>
        <position position="378"/>
    </location>
    <ligand>
        <name>acetyl-CoA</name>
        <dbReference type="ChEBI" id="CHEBI:57288"/>
    </ligand>
</feature>
<feature type="binding site" evidence="1">
    <location>
        <begin position="384"/>
        <end position="385"/>
    </location>
    <ligand>
        <name>acetyl-CoA</name>
        <dbReference type="ChEBI" id="CHEBI:57288"/>
    </ligand>
</feature>
<feature type="binding site" evidence="1">
    <location>
        <position position="403"/>
    </location>
    <ligand>
        <name>acetyl-CoA</name>
        <dbReference type="ChEBI" id="CHEBI:57288"/>
    </ligand>
</feature>
<feature type="binding site" evidence="1">
    <location>
        <position position="421"/>
    </location>
    <ligand>
        <name>acetyl-CoA</name>
        <dbReference type="ChEBI" id="CHEBI:57288"/>
    </ligand>
</feature>
<feature type="binding site" evidence="1">
    <location>
        <position position="438"/>
    </location>
    <ligand>
        <name>acetyl-CoA</name>
        <dbReference type="ChEBI" id="CHEBI:57288"/>
    </ligand>
</feature>
<evidence type="ECO:0000255" key="1">
    <source>
        <dbReference type="HAMAP-Rule" id="MF_01631"/>
    </source>
</evidence>
<evidence type="ECO:0000256" key="2">
    <source>
        <dbReference type="SAM" id="MobiDB-lite"/>
    </source>
</evidence>
<gene>
    <name evidence="1" type="primary">glmU</name>
    <name type="ordered locus">Lferr_2805</name>
</gene>
<comment type="function">
    <text evidence="1">Catalyzes the last two sequential reactions in the de novo biosynthetic pathway for UDP-N-acetylglucosamine (UDP-GlcNAc). The C-terminal domain catalyzes the transfer of acetyl group from acetyl coenzyme A to glucosamine-1-phosphate (GlcN-1-P) to produce N-acetylglucosamine-1-phosphate (GlcNAc-1-P), which is converted into UDP-GlcNAc by the transfer of uridine 5-monophosphate (from uridine 5-triphosphate), a reaction catalyzed by the N-terminal domain.</text>
</comment>
<comment type="catalytic activity">
    <reaction evidence="1">
        <text>alpha-D-glucosamine 1-phosphate + acetyl-CoA = N-acetyl-alpha-D-glucosamine 1-phosphate + CoA + H(+)</text>
        <dbReference type="Rhea" id="RHEA:13725"/>
        <dbReference type="ChEBI" id="CHEBI:15378"/>
        <dbReference type="ChEBI" id="CHEBI:57287"/>
        <dbReference type="ChEBI" id="CHEBI:57288"/>
        <dbReference type="ChEBI" id="CHEBI:57776"/>
        <dbReference type="ChEBI" id="CHEBI:58516"/>
        <dbReference type="EC" id="2.3.1.157"/>
    </reaction>
</comment>
<comment type="catalytic activity">
    <reaction evidence="1">
        <text>N-acetyl-alpha-D-glucosamine 1-phosphate + UTP + H(+) = UDP-N-acetyl-alpha-D-glucosamine + diphosphate</text>
        <dbReference type="Rhea" id="RHEA:13509"/>
        <dbReference type="ChEBI" id="CHEBI:15378"/>
        <dbReference type="ChEBI" id="CHEBI:33019"/>
        <dbReference type="ChEBI" id="CHEBI:46398"/>
        <dbReference type="ChEBI" id="CHEBI:57705"/>
        <dbReference type="ChEBI" id="CHEBI:57776"/>
        <dbReference type="EC" id="2.7.7.23"/>
    </reaction>
</comment>
<comment type="cofactor">
    <cofactor evidence="1">
        <name>Mg(2+)</name>
        <dbReference type="ChEBI" id="CHEBI:18420"/>
    </cofactor>
    <text evidence="1">Binds 1 Mg(2+) ion per subunit.</text>
</comment>
<comment type="pathway">
    <text evidence="1">Nucleotide-sugar biosynthesis; UDP-N-acetyl-alpha-D-glucosamine biosynthesis; N-acetyl-alpha-D-glucosamine 1-phosphate from alpha-D-glucosamine 6-phosphate (route II): step 2/2.</text>
</comment>
<comment type="pathway">
    <text evidence="1">Nucleotide-sugar biosynthesis; UDP-N-acetyl-alpha-D-glucosamine biosynthesis; UDP-N-acetyl-alpha-D-glucosamine from N-acetyl-alpha-D-glucosamine 1-phosphate: step 1/1.</text>
</comment>
<comment type="pathway">
    <text evidence="1">Bacterial outer membrane biogenesis; LPS lipid A biosynthesis.</text>
</comment>
<comment type="subunit">
    <text evidence="1">Homotrimer.</text>
</comment>
<comment type="subcellular location">
    <subcellularLocation>
        <location evidence="1">Cytoplasm</location>
    </subcellularLocation>
</comment>
<comment type="similarity">
    <text evidence="1">In the N-terminal section; belongs to the N-acetylglucosamine-1-phosphate uridyltransferase family.</text>
</comment>
<comment type="similarity">
    <text evidence="1">In the C-terminal section; belongs to the transferase hexapeptide repeat family.</text>
</comment>
<proteinExistence type="inferred from homology"/>
<protein>
    <recommendedName>
        <fullName evidence="1">Bifunctional protein GlmU</fullName>
    </recommendedName>
    <domain>
        <recommendedName>
            <fullName evidence="1">UDP-N-acetylglucosamine pyrophosphorylase</fullName>
            <ecNumber evidence="1">2.7.7.23</ecNumber>
        </recommendedName>
        <alternativeName>
            <fullName evidence="1">N-acetylglucosamine-1-phosphate uridyltransferase</fullName>
        </alternativeName>
    </domain>
    <domain>
        <recommendedName>
            <fullName evidence="1">Glucosamine-1-phosphate N-acetyltransferase</fullName>
            <ecNumber evidence="1">2.3.1.157</ecNumber>
        </recommendedName>
    </domain>
</protein>
<organism>
    <name type="scientific">Acidithiobacillus ferrooxidans (strain ATCC 53993 / BNL-5-31)</name>
    <name type="common">Leptospirillum ferrooxidans (ATCC 53993)</name>
    <dbReference type="NCBI Taxonomy" id="380394"/>
    <lineage>
        <taxon>Bacteria</taxon>
        <taxon>Pseudomonadati</taxon>
        <taxon>Pseudomonadota</taxon>
        <taxon>Acidithiobacillia</taxon>
        <taxon>Acidithiobacillales</taxon>
        <taxon>Acidithiobacillaceae</taxon>
        <taxon>Acidithiobacillus</taxon>
    </lineage>
</organism>
<accession>B5ER40</accession>
<dbReference type="EC" id="2.7.7.23" evidence="1"/>
<dbReference type="EC" id="2.3.1.157" evidence="1"/>
<dbReference type="EMBL" id="CP001132">
    <property type="protein sequence ID" value="ACH84991.1"/>
    <property type="molecule type" value="Genomic_DNA"/>
</dbReference>
<dbReference type="RefSeq" id="WP_012537654.1">
    <property type="nucleotide sequence ID" value="NC_011206.1"/>
</dbReference>
<dbReference type="SMR" id="B5ER40"/>
<dbReference type="GeneID" id="65282185"/>
<dbReference type="KEGG" id="afe:Lferr_2805"/>
<dbReference type="eggNOG" id="COG1207">
    <property type="taxonomic scope" value="Bacteria"/>
</dbReference>
<dbReference type="HOGENOM" id="CLU_029499_15_2_6"/>
<dbReference type="UniPathway" id="UPA00113">
    <property type="reaction ID" value="UER00532"/>
</dbReference>
<dbReference type="UniPathway" id="UPA00113">
    <property type="reaction ID" value="UER00533"/>
</dbReference>
<dbReference type="UniPathway" id="UPA00973"/>
<dbReference type="GO" id="GO:0005737">
    <property type="term" value="C:cytoplasm"/>
    <property type="evidence" value="ECO:0007669"/>
    <property type="project" value="UniProtKB-SubCell"/>
</dbReference>
<dbReference type="GO" id="GO:0016020">
    <property type="term" value="C:membrane"/>
    <property type="evidence" value="ECO:0007669"/>
    <property type="project" value="GOC"/>
</dbReference>
<dbReference type="GO" id="GO:0019134">
    <property type="term" value="F:glucosamine-1-phosphate N-acetyltransferase activity"/>
    <property type="evidence" value="ECO:0007669"/>
    <property type="project" value="UniProtKB-UniRule"/>
</dbReference>
<dbReference type="GO" id="GO:0000287">
    <property type="term" value="F:magnesium ion binding"/>
    <property type="evidence" value="ECO:0007669"/>
    <property type="project" value="UniProtKB-UniRule"/>
</dbReference>
<dbReference type="GO" id="GO:0003977">
    <property type="term" value="F:UDP-N-acetylglucosamine diphosphorylase activity"/>
    <property type="evidence" value="ECO:0007669"/>
    <property type="project" value="UniProtKB-UniRule"/>
</dbReference>
<dbReference type="GO" id="GO:0000902">
    <property type="term" value="P:cell morphogenesis"/>
    <property type="evidence" value="ECO:0007669"/>
    <property type="project" value="UniProtKB-UniRule"/>
</dbReference>
<dbReference type="GO" id="GO:0071555">
    <property type="term" value="P:cell wall organization"/>
    <property type="evidence" value="ECO:0007669"/>
    <property type="project" value="UniProtKB-KW"/>
</dbReference>
<dbReference type="GO" id="GO:0009245">
    <property type="term" value="P:lipid A biosynthetic process"/>
    <property type="evidence" value="ECO:0007669"/>
    <property type="project" value="UniProtKB-UniRule"/>
</dbReference>
<dbReference type="GO" id="GO:0009252">
    <property type="term" value="P:peptidoglycan biosynthetic process"/>
    <property type="evidence" value="ECO:0007669"/>
    <property type="project" value="UniProtKB-UniRule"/>
</dbReference>
<dbReference type="GO" id="GO:0008360">
    <property type="term" value="P:regulation of cell shape"/>
    <property type="evidence" value="ECO:0007669"/>
    <property type="project" value="UniProtKB-KW"/>
</dbReference>
<dbReference type="GO" id="GO:0006048">
    <property type="term" value="P:UDP-N-acetylglucosamine biosynthetic process"/>
    <property type="evidence" value="ECO:0007669"/>
    <property type="project" value="UniProtKB-UniPathway"/>
</dbReference>
<dbReference type="CDD" id="cd02540">
    <property type="entry name" value="GT2_GlmU_N_bac"/>
    <property type="match status" value="1"/>
</dbReference>
<dbReference type="CDD" id="cd03353">
    <property type="entry name" value="LbH_GlmU_C"/>
    <property type="match status" value="1"/>
</dbReference>
<dbReference type="Gene3D" id="2.160.10.10">
    <property type="entry name" value="Hexapeptide repeat proteins"/>
    <property type="match status" value="1"/>
</dbReference>
<dbReference type="Gene3D" id="3.90.550.10">
    <property type="entry name" value="Spore Coat Polysaccharide Biosynthesis Protein SpsA, Chain A"/>
    <property type="match status" value="1"/>
</dbReference>
<dbReference type="HAMAP" id="MF_01631">
    <property type="entry name" value="GlmU"/>
    <property type="match status" value="1"/>
</dbReference>
<dbReference type="InterPro" id="IPR005882">
    <property type="entry name" value="Bifunctional_GlmU"/>
</dbReference>
<dbReference type="InterPro" id="IPR050065">
    <property type="entry name" value="GlmU-like"/>
</dbReference>
<dbReference type="InterPro" id="IPR038009">
    <property type="entry name" value="GlmU_C_LbH"/>
</dbReference>
<dbReference type="InterPro" id="IPR001451">
    <property type="entry name" value="Hexapep"/>
</dbReference>
<dbReference type="InterPro" id="IPR018357">
    <property type="entry name" value="Hexapep_transf_CS"/>
</dbReference>
<dbReference type="InterPro" id="IPR025877">
    <property type="entry name" value="MobA-like_NTP_Trfase"/>
</dbReference>
<dbReference type="InterPro" id="IPR029044">
    <property type="entry name" value="Nucleotide-diphossugar_trans"/>
</dbReference>
<dbReference type="InterPro" id="IPR011004">
    <property type="entry name" value="Trimer_LpxA-like_sf"/>
</dbReference>
<dbReference type="NCBIfam" id="TIGR01173">
    <property type="entry name" value="glmU"/>
    <property type="match status" value="1"/>
</dbReference>
<dbReference type="PANTHER" id="PTHR43584:SF3">
    <property type="entry name" value="BIFUNCTIONAL PROTEIN GLMU"/>
    <property type="match status" value="1"/>
</dbReference>
<dbReference type="PANTHER" id="PTHR43584">
    <property type="entry name" value="NUCLEOTIDYL TRANSFERASE"/>
    <property type="match status" value="1"/>
</dbReference>
<dbReference type="Pfam" id="PF00132">
    <property type="entry name" value="Hexapep"/>
    <property type="match status" value="2"/>
</dbReference>
<dbReference type="Pfam" id="PF12804">
    <property type="entry name" value="NTP_transf_3"/>
    <property type="match status" value="1"/>
</dbReference>
<dbReference type="SUPFAM" id="SSF53448">
    <property type="entry name" value="Nucleotide-diphospho-sugar transferases"/>
    <property type="match status" value="1"/>
</dbReference>
<dbReference type="SUPFAM" id="SSF51161">
    <property type="entry name" value="Trimeric LpxA-like enzymes"/>
    <property type="match status" value="1"/>
</dbReference>
<dbReference type="PROSITE" id="PS00101">
    <property type="entry name" value="HEXAPEP_TRANSFERASES"/>
    <property type="match status" value="1"/>
</dbReference>
<sequence>MLTDIVILAAGQGTRMHSALPKVLQPLGGKPMLAHVLATATDLAVRRIHIVVGFGGDAVQAAFPDTQASWWIQAQQLGTGDALKSALPGLTGADRVLVLYGDVPLLTAATLREFLQQTPVTALGLTTASVSEPHGYGRILRDADGQVQGIREHKDCQTDEQAICEINLGMMVLPVQPLAGWLQGLSARNAQGEIYLTDVVAAARADGYVVWPFTLADATEALGVNDPVQLAILERVFQRQQLRALQMQGLRVADPARVDIRGELTCGQDCWVDPNVLFVGEVHLGHRVRVGAGAVLQDARIGDDVEILPYSHIEGAQIGAGARIGPFARIRPGTEIGEAAHIGNYVEVKAAKIGAGSKANHLSYLGDAEIGTGVNVGAGTITCNYDGANKHRTIIGNDVFIGSDSQLVAPVNIGDGATIGAGSTITKEVPPGGLTLSRSPQRTIPHWQRPRRDKK</sequence>